<proteinExistence type="inferred from homology"/>
<keyword id="KW-0067">ATP-binding</keyword>
<keyword id="KW-0418">Kinase</keyword>
<keyword id="KW-0460">Magnesium</keyword>
<keyword id="KW-0479">Metal-binding</keyword>
<keyword id="KW-0547">Nucleotide-binding</keyword>
<keyword id="KW-1185">Reference proteome</keyword>
<keyword id="KW-0677">Repeat</keyword>
<keyword id="KW-0723">Serine/threonine-protein kinase</keyword>
<keyword id="KW-0808">Transferase</keyword>
<accession>Q54JQ1</accession>
<organism>
    <name type="scientific">Dictyostelium discoideum</name>
    <name type="common">Social amoeba</name>
    <dbReference type="NCBI Taxonomy" id="44689"/>
    <lineage>
        <taxon>Eukaryota</taxon>
        <taxon>Amoebozoa</taxon>
        <taxon>Evosea</taxon>
        <taxon>Eumycetozoa</taxon>
        <taxon>Dictyostelia</taxon>
        <taxon>Dictyosteliales</taxon>
        <taxon>Dictyosteliaceae</taxon>
        <taxon>Dictyostelium</taxon>
    </lineage>
</organism>
<evidence type="ECO:0000250" key="1">
    <source>
        <dbReference type="UniProtKB" id="P28523"/>
    </source>
</evidence>
<evidence type="ECO:0000250" key="2">
    <source>
        <dbReference type="UniProtKB" id="Q869N2"/>
    </source>
</evidence>
<evidence type="ECO:0000255" key="3">
    <source>
        <dbReference type="PROSITE-ProRule" id="PRU00159"/>
    </source>
</evidence>
<evidence type="ECO:0000255" key="4">
    <source>
        <dbReference type="PROSITE-ProRule" id="PRU10027"/>
    </source>
</evidence>
<evidence type="ECO:0000256" key="5">
    <source>
        <dbReference type="SAM" id="MobiDB-lite"/>
    </source>
</evidence>
<evidence type="ECO:0000305" key="6"/>
<evidence type="ECO:0000312" key="7">
    <source>
        <dbReference type="dictyBase" id="DDB_G0287853"/>
    </source>
</evidence>
<evidence type="ECO:0000312" key="8">
    <source>
        <dbReference type="EMBL" id="EAL63573.1"/>
    </source>
</evidence>
<comment type="catalytic activity">
    <reaction evidence="2">
        <text>L-seryl-[protein] + ATP = O-phospho-L-seryl-[protein] + ADP + H(+)</text>
        <dbReference type="Rhea" id="RHEA:17989"/>
        <dbReference type="Rhea" id="RHEA-COMP:9863"/>
        <dbReference type="Rhea" id="RHEA-COMP:11604"/>
        <dbReference type="ChEBI" id="CHEBI:15378"/>
        <dbReference type="ChEBI" id="CHEBI:29999"/>
        <dbReference type="ChEBI" id="CHEBI:30616"/>
        <dbReference type="ChEBI" id="CHEBI:83421"/>
        <dbReference type="ChEBI" id="CHEBI:456216"/>
        <dbReference type="EC" id="2.7.11.1"/>
    </reaction>
</comment>
<comment type="catalytic activity">
    <reaction evidence="2">
        <text>L-threonyl-[protein] + ATP = O-phospho-L-threonyl-[protein] + ADP + H(+)</text>
        <dbReference type="Rhea" id="RHEA:46608"/>
        <dbReference type="Rhea" id="RHEA-COMP:11060"/>
        <dbReference type="Rhea" id="RHEA-COMP:11605"/>
        <dbReference type="ChEBI" id="CHEBI:15378"/>
        <dbReference type="ChEBI" id="CHEBI:30013"/>
        <dbReference type="ChEBI" id="CHEBI:30616"/>
        <dbReference type="ChEBI" id="CHEBI:61977"/>
        <dbReference type="ChEBI" id="CHEBI:456216"/>
        <dbReference type="EC" id="2.7.11.1"/>
    </reaction>
</comment>
<comment type="cofactor">
    <cofactor evidence="2">
        <name>Mg(2+)</name>
        <dbReference type="ChEBI" id="CHEBI:18420"/>
    </cofactor>
</comment>
<comment type="similarity">
    <text evidence="6">Belongs to the protein kinase superfamily. STE Ser/Thr protein kinase family. STE20 subfamily.</text>
</comment>
<sequence length="891" mass="96978">MDVEFTPSDTNKFEANITKQHQVIELNNQEEQQQPEQQEQPEQQEELKDNNEKIKTSEDSTTTTTTTATITTTGENSISITVTEANNNTNQLNKSTSSSSSLNNNKNEDNKSVTASIAPSSPVIESSAIESAIDSPYISSASVFSNATNNNNNTTTTNVVVPPPQLLESSTENITSAAEITPVTTTTTEETINIPKESIEVQKQLAETTTTAAITTTNSTQVTSTTVTNPDKLKCKMHRSNFIMTQIGGKKFTEMTLEQLLDEDDPQTGMGFKNPGPQGFLEYVGDTAPPPTPPPISTSNTTGKNTGKNSTTGKSEGKKATSNSSNVPPSPVLASSASPSPKLKSSSSSIRNSGAISGTSENGGGGNGSGTISKNTAPTTGNSTTTTTTTTSTTTSSSKDRKSVVQKQSTLGRLQKNEEERRKRKEQKRSRAREKPILIAGIEDLPAECLKMVKKSKIPEDKLIQHLNILLPILRFRTGYNLRHVPIVSSNNSTNSLGSSINKNNSNNTTTTTTTTNTNNKSPEVSTNSLDVNIINQNQNQTNSVQNNQINTSSNVITTNVIPTTTASQSSQAPYHPSHNGNEEDDYDDGSRLENAILPKGTVDLIETDRDVKKLYKNLKQIGSGGFGSVFLAKSTVDKCEIAIKKIAHVSAKAQRTNLNEIGFLNFCKHPNIVSYLRSHLVDDTIWIAMEYMQGGTLTEASQGHTFNESCIAYVAKGMLEGLMYLHAHNIVHRDIKSGNIMMTIDGKIKIVDFGLCVDANERKLVHMAGSPFWMSPEMIRGESYGCPTDIWSFAICLLELANGEPPHRKSSLTAMFTTATEGCAGLDKPERWTEHFTHFLNLCLEMDPSKRSTAEQLLKHPWINLSENPETMKKILAQIFIANVMNHLDN</sequence>
<gene>
    <name evidence="8" type="primary">mkcC</name>
    <name type="ORF">DDB_G0287853</name>
</gene>
<protein>
    <recommendedName>
        <fullName evidence="8">Probable serine/threonine-protein kinase mkcC</fullName>
        <ecNumber>2.7.11.1</ecNumber>
    </recommendedName>
    <alternativeName>
        <fullName evidence="7">MAP kinase cascade C</fullName>
    </alternativeName>
</protein>
<feature type="chain" id="PRO_0000381741" description="Probable serine/threonine-protein kinase mkcC">
    <location>
        <begin position="1"/>
        <end position="891"/>
    </location>
</feature>
<feature type="domain" description="Protein kinase" evidence="3">
    <location>
        <begin position="616"/>
        <end position="864"/>
    </location>
</feature>
<feature type="region of interest" description="Disordered" evidence="5">
    <location>
        <begin position="24"/>
        <end position="70"/>
    </location>
</feature>
<feature type="region of interest" description="Disordered" evidence="5">
    <location>
        <begin position="85"/>
        <end position="121"/>
    </location>
</feature>
<feature type="region of interest" description="Disordered" evidence="5">
    <location>
        <begin position="264"/>
        <end position="435"/>
    </location>
</feature>
<feature type="region of interest" description="Disordered" evidence="5">
    <location>
        <begin position="495"/>
        <end position="526"/>
    </location>
</feature>
<feature type="region of interest" description="Disordered" evidence="5">
    <location>
        <begin position="565"/>
        <end position="588"/>
    </location>
</feature>
<feature type="compositionally biased region" description="Low complexity" evidence="5">
    <location>
        <begin position="29"/>
        <end position="41"/>
    </location>
</feature>
<feature type="compositionally biased region" description="Basic and acidic residues" evidence="5">
    <location>
        <begin position="45"/>
        <end position="58"/>
    </location>
</feature>
<feature type="compositionally biased region" description="Low complexity" evidence="5">
    <location>
        <begin position="61"/>
        <end position="70"/>
    </location>
</feature>
<feature type="compositionally biased region" description="Low complexity" evidence="5">
    <location>
        <begin position="86"/>
        <end position="105"/>
    </location>
</feature>
<feature type="compositionally biased region" description="Low complexity" evidence="5">
    <location>
        <begin position="297"/>
        <end position="314"/>
    </location>
</feature>
<feature type="compositionally biased region" description="Low complexity" evidence="5">
    <location>
        <begin position="322"/>
        <end position="360"/>
    </location>
</feature>
<feature type="compositionally biased region" description="Low complexity" evidence="5">
    <location>
        <begin position="379"/>
        <end position="397"/>
    </location>
</feature>
<feature type="compositionally biased region" description="Basic residues" evidence="5">
    <location>
        <begin position="422"/>
        <end position="432"/>
    </location>
</feature>
<feature type="compositionally biased region" description="Low complexity" evidence="5">
    <location>
        <begin position="495"/>
        <end position="522"/>
    </location>
</feature>
<feature type="active site" description="Proton acceptor" evidence="1 3 4">
    <location>
        <position position="735"/>
    </location>
</feature>
<feature type="binding site" evidence="1 3">
    <location>
        <begin position="622"/>
        <end position="630"/>
    </location>
    <ligand>
        <name>ATP</name>
        <dbReference type="ChEBI" id="CHEBI:30616"/>
    </ligand>
</feature>
<feature type="binding site" evidence="1 3">
    <location>
        <position position="645"/>
    </location>
    <ligand>
        <name>ATP</name>
        <dbReference type="ChEBI" id="CHEBI:30616"/>
    </ligand>
</feature>
<dbReference type="EC" id="2.7.11.1"/>
<dbReference type="EMBL" id="AAFI02000104">
    <property type="protein sequence ID" value="EAL63573.1"/>
    <property type="molecule type" value="Genomic_DNA"/>
</dbReference>
<dbReference type="RefSeq" id="XP_637101.1">
    <property type="nucleotide sequence ID" value="XM_632009.1"/>
</dbReference>
<dbReference type="SMR" id="Q54JQ1"/>
<dbReference type="GlyGen" id="Q54JQ1">
    <property type="glycosylation" value="1 site"/>
</dbReference>
<dbReference type="PaxDb" id="44689-DDB0229967"/>
<dbReference type="EnsemblProtists" id="EAL63573">
    <property type="protein sequence ID" value="EAL63573"/>
    <property type="gene ID" value="DDB_G0287853"/>
</dbReference>
<dbReference type="GeneID" id="8626355"/>
<dbReference type="KEGG" id="ddi:DDB_G0287853"/>
<dbReference type="dictyBase" id="DDB_G0287853">
    <property type="gene designation" value="mkcC"/>
</dbReference>
<dbReference type="VEuPathDB" id="AmoebaDB:DDB_G0287853"/>
<dbReference type="eggNOG" id="KOG0578">
    <property type="taxonomic scope" value="Eukaryota"/>
</dbReference>
<dbReference type="HOGENOM" id="CLU_324262_0_0_1"/>
<dbReference type="InParanoid" id="Q54JQ1"/>
<dbReference type="OMA" id="CIAYVAK"/>
<dbReference type="Reactome" id="R-DDI-383280">
    <property type="pathway name" value="Nuclear Receptor transcription pathway"/>
</dbReference>
<dbReference type="PRO" id="PR:Q54JQ1"/>
<dbReference type="Proteomes" id="UP000002195">
    <property type="component" value="Chromosome 5"/>
</dbReference>
<dbReference type="GO" id="GO:0005737">
    <property type="term" value="C:cytoplasm"/>
    <property type="evidence" value="ECO:0000318"/>
    <property type="project" value="GO_Central"/>
</dbReference>
<dbReference type="GO" id="GO:0005524">
    <property type="term" value="F:ATP binding"/>
    <property type="evidence" value="ECO:0007669"/>
    <property type="project" value="UniProtKB-KW"/>
</dbReference>
<dbReference type="GO" id="GO:0046872">
    <property type="term" value="F:metal ion binding"/>
    <property type="evidence" value="ECO:0007669"/>
    <property type="project" value="UniProtKB-KW"/>
</dbReference>
<dbReference type="GO" id="GO:0106310">
    <property type="term" value="F:protein serine kinase activity"/>
    <property type="evidence" value="ECO:0007669"/>
    <property type="project" value="RHEA"/>
</dbReference>
<dbReference type="GO" id="GO:0004674">
    <property type="term" value="F:protein serine/threonine kinase activity"/>
    <property type="evidence" value="ECO:0000318"/>
    <property type="project" value="GO_Central"/>
</dbReference>
<dbReference type="CDD" id="cd05122">
    <property type="entry name" value="PKc_STE"/>
    <property type="match status" value="1"/>
</dbReference>
<dbReference type="FunFam" id="1.10.510.10:FF:001158">
    <property type="entry name" value="Probable serine/threonine-protein kinase mkcE"/>
    <property type="match status" value="1"/>
</dbReference>
<dbReference type="Gene3D" id="1.10.510.10">
    <property type="entry name" value="Transferase(Phosphotransferase) domain 1"/>
    <property type="match status" value="1"/>
</dbReference>
<dbReference type="InterPro" id="IPR011009">
    <property type="entry name" value="Kinase-like_dom_sf"/>
</dbReference>
<dbReference type="InterPro" id="IPR051931">
    <property type="entry name" value="PAK3-like"/>
</dbReference>
<dbReference type="InterPro" id="IPR000719">
    <property type="entry name" value="Prot_kinase_dom"/>
</dbReference>
<dbReference type="InterPro" id="IPR017441">
    <property type="entry name" value="Protein_kinase_ATP_BS"/>
</dbReference>
<dbReference type="InterPro" id="IPR008271">
    <property type="entry name" value="Ser/Thr_kinase_AS"/>
</dbReference>
<dbReference type="PANTHER" id="PTHR45832">
    <property type="entry name" value="SERINE/THREONINE-PROTEIN KINASE SAMKA-RELATED-RELATED"/>
    <property type="match status" value="1"/>
</dbReference>
<dbReference type="PANTHER" id="PTHR45832:SF22">
    <property type="entry name" value="SERINE_THREONINE-PROTEIN KINASE SAMKA-RELATED"/>
    <property type="match status" value="1"/>
</dbReference>
<dbReference type="Pfam" id="PF00069">
    <property type="entry name" value="Pkinase"/>
    <property type="match status" value="1"/>
</dbReference>
<dbReference type="SMART" id="SM00220">
    <property type="entry name" value="S_TKc"/>
    <property type="match status" value="1"/>
</dbReference>
<dbReference type="SUPFAM" id="SSF56112">
    <property type="entry name" value="Protein kinase-like (PK-like)"/>
    <property type="match status" value="1"/>
</dbReference>
<dbReference type="PROSITE" id="PS00107">
    <property type="entry name" value="PROTEIN_KINASE_ATP"/>
    <property type="match status" value="1"/>
</dbReference>
<dbReference type="PROSITE" id="PS50011">
    <property type="entry name" value="PROTEIN_KINASE_DOM"/>
    <property type="match status" value="1"/>
</dbReference>
<dbReference type="PROSITE" id="PS00108">
    <property type="entry name" value="PROTEIN_KINASE_ST"/>
    <property type="match status" value="1"/>
</dbReference>
<reference evidence="8" key="1">
    <citation type="journal article" date="2005" name="Nature">
        <title>The genome of the social amoeba Dictyostelium discoideum.</title>
        <authorList>
            <person name="Eichinger L."/>
            <person name="Pachebat J.A."/>
            <person name="Gloeckner G."/>
            <person name="Rajandream M.A."/>
            <person name="Sucgang R."/>
            <person name="Berriman M."/>
            <person name="Song J."/>
            <person name="Olsen R."/>
            <person name="Szafranski K."/>
            <person name="Xu Q."/>
            <person name="Tunggal B."/>
            <person name="Kummerfeld S."/>
            <person name="Madera M."/>
            <person name="Konfortov B.A."/>
            <person name="Rivero F."/>
            <person name="Bankier A.T."/>
            <person name="Lehmann R."/>
            <person name="Hamlin N."/>
            <person name="Davies R."/>
            <person name="Gaudet P."/>
            <person name="Fey P."/>
            <person name="Pilcher K."/>
            <person name="Chen G."/>
            <person name="Saunders D."/>
            <person name="Sodergren E.J."/>
            <person name="Davis P."/>
            <person name="Kerhornou A."/>
            <person name="Nie X."/>
            <person name="Hall N."/>
            <person name="Anjard C."/>
            <person name="Hemphill L."/>
            <person name="Bason N."/>
            <person name="Farbrother P."/>
            <person name="Desany B."/>
            <person name="Just E."/>
            <person name="Morio T."/>
            <person name="Rost R."/>
            <person name="Churcher C.M."/>
            <person name="Cooper J."/>
            <person name="Haydock S."/>
            <person name="van Driessche N."/>
            <person name="Cronin A."/>
            <person name="Goodhead I."/>
            <person name="Muzny D.M."/>
            <person name="Mourier T."/>
            <person name="Pain A."/>
            <person name="Lu M."/>
            <person name="Harper D."/>
            <person name="Lindsay R."/>
            <person name="Hauser H."/>
            <person name="James K.D."/>
            <person name="Quiles M."/>
            <person name="Madan Babu M."/>
            <person name="Saito T."/>
            <person name="Buchrieser C."/>
            <person name="Wardroper A."/>
            <person name="Felder M."/>
            <person name="Thangavelu M."/>
            <person name="Johnson D."/>
            <person name="Knights A."/>
            <person name="Loulseged H."/>
            <person name="Mungall K.L."/>
            <person name="Oliver K."/>
            <person name="Price C."/>
            <person name="Quail M.A."/>
            <person name="Urushihara H."/>
            <person name="Hernandez J."/>
            <person name="Rabbinowitsch E."/>
            <person name="Steffen D."/>
            <person name="Sanders M."/>
            <person name="Ma J."/>
            <person name="Kohara Y."/>
            <person name="Sharp S."/>
            <person name="Simmonds M.N."/>
            <person name="Spiegler S."/>
            <person name="Tivey A."/>
            <person name="Sugano S."/>
            <person name="White B."/>
            <person name="Walker D."/>
            <person name="Woodward J.R."/>
            <person name="Winckler T."/>
            <person name="Tanaka Y."/>
            <person name="Shaulsky G."/>
            <person name="Schleicher M."/>
            <person name="Weinstock G.M."/>
            <person name="Rosenthal A."/>
            <person name="Cox E.C."/>
            <person name="Chisholm R.L."/>
            <person name="Gibbs R.A."/>
            <person name="Loomis W.F."/>
            <person name="Platzer M."/>
            <person name="Kay R.R."/>
            <person name="Williams J.G."/>
            <person name="Dear P.H."/>
            <person name="Noegel A.A."/>
            <person name="Barrell B.G."/>
            <person name="Kuspa A."/>
        </authorList>
    </citation>
    <scope>NUCLEOTIDE SEQUENCE [LARGE SCALE GENOMIC DNA]</scope>
    <source>
        <strain evidence="8">AX4</strain>
    </source>
</reference>
<name>MKCC_DICDI</name>